<reference key="1">
    <citation type="journal article" date="1992" name="Biochem. J.">
        <title>Molecular cloning and nucleotide sequence of a cDNA encoding hydroxyindole O-methyltransferase from chicken pineal gland.</title>
        <authorList>
            <person name="Voisin P."/>
            <person name="Guerlotte J."/>
            <person name="Bernard M."/>
            <person name="Collin J.P."/>
            <person name="Cogne M."/>
        </authorList>
    </citation>
    <scope>NUCLEOTIDE SEQUENCE [MRNA]</scope>
    <scope>FUNCTION</scope>
    <scope>CATALYTIC ACTIVITY</scope>
    <scope>BIOPHYSICOCHEMICAL PROPERTIES</scope>
    <scope>PATHWAY</scope>
    <scope>TISSUE SPECIFICITY</scope>
    <source>
        <strain>Hubbard</strain>
        <tissue>Pineal gland</tissue>
    </source>
</reference>
<evidence type="ECO:0000250" key="1"/>
<evidence type="ECO:0000255" key="2">
    <source>
        <dbReference type="PROSITE-ProRule" id="PRU01020"/>
    </source>
</evidence>
<evidence type="ECO:0000269" key="3">
    <source>
    </source>
</evidence>
<evidence type="ECO:0000305" key="4">
    <source>
    </source>
</evidence>
<protein>
    <recommendedName>
        <fullName>Acetylserotonin O-methyltransferase</fullName>
        <ecNumber evidence="3">2.1.1.4</ecNumber>
    </recommendedName>
    <alternativeName>
        <fullName>Hydroxyindole O-methyltransferase</fullName>
        <shortName>HIOMT</shortName>
    </alternativeName>
</protein>
<gene>
    <name type="primary">ASMT</name>
</gene>
<dbReference type="EC" id="2.1.1.4" evidence="3"/>
<dbReference type="EMBL" id="X62309">
    <property type="protein sequence ID" value="CAA44189.1"/>
    <property type="molecule type" value="mRNA"/>
</dbReference>
<dbReference type="PIR" id="S21265">
    <property type="entry name" value="S21265"/>
</dbReference>
<dbReference type="RefSeq" id="NP_990674.1">
    <property type="nucleotide sequence ID" value="NM_205343.1"/>
</dbReference>
<dbReference type="SMR" id="Q92056"/>
<dbReference type="FunCoup" id="Q92056">
    <property type="interactions" value="8"/>
</dbReference>
<dbReference type="STRING" id="9031.ENSGALP00000026872"/>
<dbReference type="PaxDb" id="9031-ENSGALP00000026872"/>
<dbReference type="GeneID" id="396286"/>
<dbReference type="KEGG" id="gga:396286"/>
<dbReference type="CTD" id="438"/>
<dbReference type="VEuPathDB" id="HostDB:geneid_396286"/>
<dbReference type="eggNOG" id="KOG3178">
    <property type="taxonomic scope" value="Eukaryota"/>
</dbReference>
<dbReference type="InParanoid" id="Q92056"/>
<dbReference type="OrthoDB" id="1606438at2759"/>
<dbReference type="PhylomeDB" id="Q92056"/>
<dbReference type="UniPathway" id="UPA00837">
    <property type="reaction ID" value="UER00815"/>
</dbReference>
<dbReference type="PRO" id="PR:Q92056"/>
<dbReference type="Proteomes" id="UP000000539">
    <property type="component" value="Unassembled WGS sequence"/>
</dbReference>
<dbReference type="GO" id="GO:0017096">
    <property type="term" value="F:acetylserotonin O-methyltransferase activity"/>
    <property type="evidence" value="ECO:0000250"/>
    <property type="project" value="UniProtKB"/>
</dbReference>
<dbReference type="GO" id="GO:0046983">
    <property type="term" value="F:protein dimerization activity"/>
    <property type="evidence" value="ECO:0007669"/>
    <property type="project" value="InterPro"/>
</dbReference>
<dbReference type="GO" id="GO:0006629">
    <property type="term" value="P:lipid metabolic process"/>
    <property type="evidence" value="ECO:0007669"/>
    <property type="project" value="UniProtKB-KW"/>
</dbReference>
<dbReference type="GO" id="GO:0030187">
    <property type="term" value="P:melatonin biosynthetic process"/>
    <property type="evidence" value="ECO:0000250"/>
    <property type="project" value="UniProtKB"/>
</dbReference>
<dbReference type="GO" id="GO:0032259">
    <property type="term" value="P:methylation"/>
    <property type="evidence" value="ECO:0000318"/>
    <property type="project" value="GO_Central"/>
</dbReference>
<dbReference type="FunFam" id="1.10.10.10:FF:000358">
    <property type="entry name" value="Acetylserotonin O-methyltransferase"/>
    <property type="match status" value="1"/>
</dbReference>
<dbReference type="FunFam" id="3.40.50.150:FF:000146">
    <property type="entry name" value="Acetylserotonin O-methyltransferase"/>
    <property type="match status" value="1"/>
</dbReference>
<dbReference type="Gene3D" id="3.40.50.150">
    <property type="entry name" value="Vaccinia Virus protein VP39"/>
    <property type="match status" value="1"/>
</dbReference>
<dbReference type="Gene3D" id="1.10.10.10">
    <property type="entry name" value="Winged helix-like DNA-binding domain superfamily/Winged helix DNA-binding domain"/>
    <property type="match status" value="1"/>
</dbReference>
<dbReference type="InterPro" id="IPR016461">
    <property type="entry name" value="COMT-like"/>
</dbReference>
<dbReference type="InterPro" id="IPR001077">
    <property type="entry name" value="O_MeTrfase_dom"/>
</dbReference>
<dbReference type="InterPro" id="IPR012967">
    <property type="entry name" value="Plant_O-MeTrfase_dimerisation"/>
</dbReference>
<dbReference type="InterPro" id="IPR029063">
    <property type="entry name" value="SAM-dependent_MTases_sf"/>
</dbReference>
<dbReference type="InterPro" id="IPR036388">
    <property type="entry name" value="WH-like_DNA-bd_sf"/>
</dbReference>
<dbReference type="InterPro" id="IPR036390">
    <property type="entry name" value="WH_DNA-bd_sf"/>
</dbReference>
<dbReference type="PANTHER" id="PTHR43712:SF2">
    <property type="entry name" value="O-METHYLTRANSFERASE CICE"/>
    <property type="match status" value="1"/>
</dbReference>
<dbReference type="PANTHER" id="PTHR43712">
    <property type="entry name" value="PUTATIVE (AFU_ORTHOLOGUE AFUA_4G14580)-RELATED"/>
    <property type="match status" value="1"/>
</dbReference>
<dbReference type="Pfam" id="PF08100">
    <property type="entry name" value="Dimerisation"/>
    <property type="match status" value="1"/>
</dbReference>
<dbReference type="Pfam" id="PF00891">
    <property type="entry name" value="Methyltransf_2"/>
    <property type="match status" value="1"/>
</dbReference>
<dbReference type="PIRSF" id="PIRSF005739">
    <property type="entry name" value="O-mtase"/>
    <property type="match status" value="1"/>
</dbReference>
<dbReference type="SUPFAM" id="SSF53335">
    <property type="entry name" value="S-adenosyl-L-methionine-dependent methyltransferases"/>
    <property type="match status" value="1"/>
</dbReference>
<dbReference type="SUPFAM" id="SSF46785">
    <property type="entry name" value="Winged helix' DNA-binding domain"/>
    <property type="match status" value="1"/>
</dbReference>
<dbReference type="PROSITE" id="PS51683">
    <property type="entry name" value="SAM_OMT_II"/>
    <property type="match status" value="1"/>
</dbReference>
<sequence>MDSTEDLDYPQIIFQYSNGFLVSKVMFTACELGVFDLLLQSGRPLSLDVIAARLGTSIMGMERLLDACVGLKLLAVELRREGAFYRNTEISNIYLTKSSPKSQYHIMMYYSNTVYLCWHYLTDAVREGRNQYERAFGISSKDLFGARYRSEEEMLKFLAGQNSIWSICGRDVLTAFDLSPFTQIYDLGGGGGALAQECVFLYPNCTVTIYDLPKVVQVAKERLVPPEERRIAFHEGDFFKDSIPEADLYILSKILHDWDDKKCRQLLAEVYKACRPGGGVLLVESLLSEDRSGPVETQLYSLNMLVQTEGKERTAVEYSELLGAAGFREVQVRRTGKLYDAVLGRK</sequence>
<keyword id="KW-0443">Lipid metabolism</keyword>
<keyword id="KW-0471">Melatonin biosynthesis</keyword>
<keyword id="KW-0489">Methyltransferase</keyword>
<keyword id="KW-1185">Reference proteome</keyword>
<keyword id="KW-0949">S-adenosyl-L-methionine</keyword>
<keyword id="KW-0808">Transferase</keyword>
<comment type="function">
    <text evidence="3">Catalyzes the transfer of a methyl group onto N-acetylserotonin, producing melatonin (N-acetyl-5-methoxytryptamine).</text>
</comment>
<comment type="catalytic activity">
    <reaction evidence="3">
        <text>N-acetylserotonin + S-adenosyl-L-methionine = melatonin + S-adenosyl-L-homocysteine + H(+)</text>
        <dbReference type="Rhea" id="RHEA:15573"/>
        <dbReference type="ChEBI" id="CHEBI:15378"/>
        <dbReference type="ChEBI" id="CHEBI:16796"/>
        <dbReference type="ChEBI" id="CHEBI:17697"/>
        <dbReference type="ChEBI" id="CHEBI:57856"/>
        <dbReference type="ChEBI" id="CHEBI:59789"/>
        <dbReference type="EC" id="2.1.1.4"/>
    </reaction>
    <physiologicalReaction direction="left-to-right" evidence="4">
        <dbReference type="Rhea" id="RHEA:15574"/>
    </physiologicalReaction>
</comment>
<comment type="biophysicochemical properties">
    <kinetics>
        <KM evidence="3">5 uM for N-acetylserotonin</KM>
        <KM evidence="3">8 uM for S-adenosyl-L-methionine</KM>
    </kinetics>
</comment>
<comment type="pathway">
    <text evidence="4">Aromatic compound metabolism; melatonin biosynthesis; melatonin from serotonin: step 1/2.</text>
</comment>
<comment type="subunit">
    <text evidence="1">Homodimer.</text>
</comment>
<comment type="tissue specificity">
    <text evidence="3">Expressed in pineal gland and retina.</text>
</comment>
<comment type="similarity">
    <text evidence="2">Belongs to the class I-like SAM-binding methyltransferase superfamily. Cation-independent O-methyltransferase family.</text>
</comment>
<accession>Q92056</accession>
<organism>
    <name type="scientific">Gallus gallus</name>
    <name type="common">Chicken</name>
    <dbReference type="NCBI Taxonomy" id="9031"/>
    <lineage>
        <taxon>Eukaryota</taxon>
        <taxon>Metazoa</taxon>
        <taxon>Chordata</taxon>
        <taxon>Craniata</taxon>
        <taxon>Vertebrata</taxon>
        <taxon>Euteleostomi</taxon>
        <taxon>Archelosauria</taxon>
        <taxon>Archosauria</taxon>
        <taxon>Dinosauria</taxon>
        <taxon>Saurischia</taxon>
        <taxon>Theropoda</taxon>
        <taxon>Coelurosauria</taxon>
        <taxon>Aves</taxon>
        <taxon>Neognathae</taxon>
        <taxon>Galloanserae</taxon>
        <taxon>Galliformes</taxon>
        <taxon>Phasianidae</taxon>
        <taxon>Phasianinae</taxon>
        <taxon>Gallus</taxon>
    </lineage>
</organism>
<feature type="chain" id="PRO_0000083981" description="Acetylserotonin O-methyltransferase">
    <location>
        <begin position="1"/>
        <end position="346"/>
    </location>
</feature>
<feature type="active site" description="Proton donor/acceptor" evidence="1">
    <location>
        <position position="256"/>
    </location>
</feature>
<feature type="binding site" evidence="2">
    <location>
        <position position="148"/>
    </location>
    <ligand>
        <name>S-adenosyl-L-methionine</name>
        <dbReference type="ChEBI" id="CHEBI:59789"/>
    </ligand>
</feature>
<feature type="binding site" evidence="2">
    <location>
        <position position="165"/>
    </location>
    <ligand>
        <name>S-adenosyl-L-methionine</name>
        <dbReference type="ChEBI" id="CHEBI:59789"/>
    </ligand>
</feature>
<feature type="binding site" evidence="2">
    <location>
        <position position="211"/>
    </location>
    <ligand>
        <name>S-adenosyl-L-methionine</name>
        <dbReference type="ChEBI" id="CHEBI:59789"/>
    </ligand>
</feature>
<feature type="binding site" evidence="2">
    <location>
        <begin position="236"/>
        <end position="238"/>
    </location>
    <ligand>
        <name>S-adenosyl-L-methionine</name>
        <dbReference type="ChEBI" id="CHEBI:59789"/>
    </ligand>
</feature>
<feature type="binding site" evidence="2">
    <location>
        <position position="253"/>
    </location>
    <ligand>
        <name>S-adenosyl-L-methionine</name>
        <dbReference type="ChEBI" id="CHEBI:59789"/>
    </ligand>
</feature>
<feature type="binding site" evidence="1">
    <location>
        <position position="257"/>
    </location>
    <ligand>
        <name>substrate</name>
    </ligand>
</feature>
<feature type="binding site" evidence="1">
    <location>
        <position position="303"/>
    </location>
    <ligand>
        <name>substrate</name>
    </ligand>
</feature>
<feature type="binding site" evidence="1">
    <location>
        <position position="307"/>
    </location>
    <ligand>
        <name>substrate</name>
    </ligand>
</feature>
<name>ASMT_CHICK</name>
<proteinExistence type="evidence at protein level"/>